<feature type="signal peptide" evidence="1">
    <location>
        <begin position="1"/>
        <end position="33"/>
    </location>
</feature>
<feature type="chain" id="PRO_1000026700" description="Tol-Pal system protein TolB" evidence="1">
    <location>
        <begin position="34"/>
        <end position="443"/>
    </location>
</feature>
<dbReference type="EMBL" id="CP000708">
    <property type="protein sequence ID" value="ABQ61242.1"/>
    <property type="molecule type" value="Genomic_DNA"/>
</dbReference>
<dbReference type="RefSeq" id="WP_006013596.1">
    <property type="nucleotide sequence ID" value="NC_009505.1"/>
</dbReference>
<dbReference type="SMR" id="A5VS52"/>
<dbReference type="GeneID" id="45125000"/>
<dbReference type="KEGG" id="bov:BOV_1639"/>
<dbReference type="HOGENOM" id="CLU_047123_0_0_5"/>
<dbReference type="PhylomeDB" id="A5VS52"/>
<dbReference type="Proteomes" id="UP000006383">
    <property type="component" value="Chromosome I"/>
</dbReference>
<dbReference type="GO" id="GO:0042597">
    <property type="term" value="C:periplasmic space"/>
    <property type="evidence" value="ECO:0007669"/>
    <property type="project" value="UniProtKB-SubCell"/>
</dbReference>
<dbReference type="GO" id="GO:0051301">
    <property type="term" value="P:cell division"/>
    <property type="evidence" value="ECO:0007669"/>
    <property type="project" value="UniProtKB-UniRule"/>
</dbReference>
<dbReference type="GO" id="GO:0017038">
    <property type="term" value="P:protein import"/>
    <property type="evidence" value="ECO:0007669"/>
    <property type="project" value="InterPro"/>
</dbReference>
<dbReference type="Gene3D" id="2.120.10.30">
    <property type="entry name" value="TolB, C-terminal domain"/>
    <property type="match status" value="1"/>
</dbReference>
<dbReference type="Gene3D" id="3.40.50.10070">
    <property type="entry name" value="TolB, N-terminal domain"/>
    <property type="match status" value="1"/>
</dbReference>
<dbReference type="HAMAP" id="MF_00671">
    <property type="entry name" value="TolB"/>
    <property type="match status" value="1"/>
</dbReference>
<dbReference type="InterPro" id="IPR011042">
    <property type="entry name" value="6-blade_b-propeller_TolB-like"/>
</dbReference>
<dbReference type="InterPro" id="IPR011659">
    <property type="entry name" value="PD40"/>
</dbReference>
<dbReference type="InterPro" id="IPR014167">
    <property type="entry name" value="Tol-Pal_TolB"/>
</dbReference>
<dbReference type="InterPro" id="IPR007195">
    <property type="entry name" value="TolB_N"/>
</dbReference>
<dbReference type="NCBIfam" id="TIGR02800">
    <property type="entry name" value="propeller_TolB"/>
    <property type="match status" value="1"/>
</dbReference>
<dbReference type="PANTHER" id="PTHR36842:SF1">
    <property type="entry name" value="PROTEIN TOLB"/>
    <property type="match status" value="1"/>
</dbReference>
<dbReference type="PANTHER" id="PTHR36842">
    <property type="entry name" value="PROTEIN TOLB HOMOLOG"/>
    <property type="match status" value="1"/>
</dbReference>
<dbReference type="Pfam" id="PF07676">
    <property type="entry name" value="PD40"/>
    <property type="match status" value="3"/>
</dbReference>
<dbReference type="Pfam" id="PF04052">
    <property type="entry name" value="TolB_N"/>
    <property type="match status" value="1"/>
</dbReference>
<dbReference type="SUPFAM" id="SSF52964">
    <property type="entry name" value="TolB, N-terminal domain"/>
    <property type="match status" value="1"/>
</dbReference>
<dbReference type="SUPFAM" id="SSF69304">
    <property type="entry name" value="Tricorn protease N-terminal domain"/>
    <property type="match status" value="1"/>
</dbReference>
<gene>
    <name evidence="1" type="primary">tolB</name>
    <name type="ordered locus">BOV_1639</name>
</gene>
<protein>
    <recommendedName>
        <fullName evidence="1">Tol-Pal system protein TolB</fullName>
    </recommendedName>
</protein>
<proteinExistence type="inferred from homology"/>
<comment type="function">
    <text evidence="1">Part of the Tol-Pal system, which plays a role in outer membrane invagination during cell division and is important for maintaining outer membrane integrity.</text>
</comment>
<comment type="subunit">
    <text evidence="1">The Tol-Pal system is composed of five core proteins: the inner membrane proteins TolA, TolQ and TolR, the periplasmic protein TolB and the outer membrane protein Pal. They form a network linking the inner and outer membranes and the peptidoglycan layer.</text>
</comment>
<comment type="subcellular location">
    <subcellularLocation>
        <location evidence="1">Periplasm</location>
    </subcellularLocation>
</comment>
<comment type="similarity">
    <text evidence="1">Belongs to the TolB family.</text>
</comment>
<sequence>MKIGIINTKIRTVFSAFACMIAASLVCTMPARAVVEININKGVIEPLPIAITDFLSADQLGSNITSVIAADLERSGLFAPIDKGAFIEKISNPDAAPRFEDWKVINAQALVTGRITKQPDGRLKAEFRLWDTFGGQQMIGQQFFTTPDNWRRVAHIIADAIYERLTGDKGYFDTRVVFVDESGPAQKRVKRLAIMDQDGANVRFISDGRALSLTPRFSPNWQEVTYMSFEGGSPKVYLLQLETGQRELVGNFPGMTIAPRFSPDGQKVVMSLLQDDGSANIYTMDLRNRTTTRLTSSQAIDTGASYSPDGSQIVFTSDRGGRPQLYVMGADGSNPRRISMGDGSYSTPVWSPRGDLIAFTKQSQGQFSIGVMKTDGSGERLLTSGFHNEGPTWAPNGRVLMFFRKAAGAGGPKLFTIDLTGRNERQIQTPNFASDPAWSPLLE</sequence>
<keyword id="KW-0131">Cell cycle</keyword>
<keyword id="KW-0132">Cell division</keyword>
<keyword id="KW-0574">Periplasm</keyword>
<keyword id="KW-0732">Signal</keyword>
<accession>A5VS52</accession>
<name>TOLB_BRUO2</name>
<organism>
    <name type="scientific">Brucella ovis (strain ATCC 25840 / 63/290 / NCTC 10512)</name>
    <dbReference type="NCBI Taxonomy" id="444178"/>
    <lineage>
        <taxon>Bacteria</taxon>
        <taxon>Pseudomonadati</taxon>
        <taxon>Pseudomonadota</taxon>
        <taxon>Alphaproteobacteria</taxon>
        <taxon>Hyphomicrobiales</taxon>
        <taxon>Brucellaceae</taxon>
        <taxon>Brucella/Ochrobactrum group</taxon>
        <taxon>Brucella</taxon>
    </lineage>
</organism>
<reference key="1">
    <citation type="journal article" date="2009" name="PLoS ONE">
        <title>Genome degradation in Brucella ovis corresponds with narrowing of its host range and tissue tropism.</title>
        <authorList>
            <person name="Tsolis R.M."/>
            <person name="Seshadri R."/>
            <person name="Santos R.L."/>
            <person name="Sangari F.J."/>
            <person name="Lobo J.M."/>
            <person name="de Jong M.F."/>
            <person name="Ren Q."/>
            <person name="Myers G."/>
            <person name="Brinkac L.M."/>
            <person name="Nelson W.C."/>
            <person name="Deboy R.T."/>
            <person name="Angiuoli S."/>
            <person name="Khouri H."/>
            <person name="Dimitrov G."/>
            <person name="Robinson J.R."/>
            <person name="Mulligan S."/>
            <person name="Walker R.L."/>
            <person name="Elzer P.E."/>
            <person name="Hassan K.A."/>
            <person name="Paulsen I.T."/>
        </authorList>
    </citation>
    <scope>NUCLEOTIDE SEQUENCE [LARGE SCALE GENOMIC DNA]</scope>
    <source>
        <strain>ATCC 25840 / 63/290 / NCTC 10512</strain>
    </source>
</reference>
<evidence type="ECO:0000255" key="1">
    <source>
        <dbReference type="HAMAP-Rule" id="MF_00671"/>
    </source>
</evidence>